<accession>P0DJX1</accession>
<keyword id="KW-0010">Activator</keyword>
<keyword id="KW-0025">Alternative splicing</keyword>
<keyword id="KW-1048">Host nucleus</keyword>
<keyword id="KW-0945">Host-virus interaction</keyword>
<keyword id="KW-0426">Late protein</keyword>
<keyword id="KW-1185">Reference proteome</keyword>
<keyword id="KW-0678">Repressor</keyword>
<keyword id="KW-0804">Transcription</keyword>
<keyword id="KW-0805">Transcription regulation</keyword>
<keyword id="KW-0231">Viral genome packaging</keyword>
<keyword id="KW-1188">Viral release from host cell</keyword>
<name>PKG2_ADE02</name>
<reference key="1">
    <citation type="journal article" date="1979" name="Gene">
        <title>Nucleotide sequence of the EcoRI-F fragment of adenovirus 2 genome.</title>
        <authorList>
            <person name="Galibert F."/>
            <person name="Herisse J."/>
            <person name="Courtois G."/>
        </authorList>
    </citation>
    <scope>NUCLEOTIDE SEQUENCE [GENOMIC DNA]</scope>
</reference>
<reference key="2">
    <citation type="journal article" date="2006" name="J. Virol.">
        <title>The L4 22-kilodalton protein plays a role in packaging of the adenovirus genome.</title>
        <authorList>
            <person name="Ostapchuk P."/>
            <person name="Anderson M.E."/>
            <person name="Chandrasekhar S."/>
            <person name="Hearing P."/>
        </authorList>
    </citation>
    <scope>FUNCTION</scope>
    <source>
        <strain>Human adenovirus C serotype 5</strain>
    </source>
</reference>
<reference key="3">
    <citation type="journal article" date="2007" name="J. Virol.">
        <title>Ternary complex formation on the adenovirus packaging sequence by the IVa2 and L4 22-kilodalton proteins.</title>
        <authorList>
            <person name="Ewing S.G."/>
            <person name="Byrd S.A."/>
            <person name="Christensen J.B."/>
            <person name="Tyler R.E."/>
            <person name="Imperiale M.J."/>
        </authorList>
    </citation>
    <scope>INTERACTION WITH PACKAGING PROTEIN 1</scope>
</reference>
<reference key="4">
    <citation type="journal article" date="2008" name="Front. Biosci.">
        <title>Temporal regulation of adenovirus major late alternative RNA splicing.</title>
        <authorList>
            <person name="Akusjarvi G."/>
        </authorList>
    </citation>
    <scope>REVIEW</scope>
    <scope>ALTERNATIVE SPLICING</scope>
</reference>
<reference key="5">
    <citation type="journal article" date="2009" name="J. Virol.">
        <title>Adenovirus serotype 5 L4-22K and L4-33K proteins have distinct functions in regulating late gene expression.</title>
        <authorList>
            <person name="Morris S.J."/>
            <person name="Leppard K.N."/>
        </authorList>
    </citation>
    <scope>FUNCTION</scope>
    <source>
        <strain>Human adenovirus C serotype 5</strain>
    </source>
</reference>
<reference key="6">
    <citation type="journal article" date="2010" name="Virus Res.">
        <title>Adenovirus L4-22K stimulates major late transcription by a mechanism requiring the intragenic late-specific transcription factor-binding site.</title>
        <authorList>
            <person name="Backstrom E."/>
            <person name="Kaufmann K.B."/>
            <person name="Lan X."/>
            <person name="Akusjarvi G."/>
        </authorList>
    </citation>
    <scope>FUNCTION</scope>
</reference>
<reference key="7">
    <citation type="journal article" date="2010" name="Biochemistry">
        <title>Self-association of the adenoviral L4-22K protein.</title>
        <authorList>
            <person name="Yang T.-C."/>
            <person name="Maluf N.K."/>
        </authorList>
    </citation>
    <scope>SUBUNIT</scope>
</reference>
<reference key="8">
    <citation type="journal article" date="2012" name="J. Virol.">
        <title>The adenovirus L4-22K Protein is multifunctional and is an integral component of crucial aspects of infection.</title>
        <authorList>
            <person name="Wu K."/>
            <person name="Orozco D."/>
            <person name="Hearing P."/>
        </authorList>
    </citation>
    <scope>FUNCTION</scope>
    <scope>IDENTIFICATION IN THE PACKAGING COMPLEX</scope>
    <source>
        <strain>Human adenovirus C serotype 5</strain>
    </source>
</reference>
<reference key="9">
    <citation type="journal article" date="2012" name="Virology">
        <title>Serine 192 in the tiny RS repeat of the adenoviral L4-33K splicing enhancer protein is essential for function and reorganization of the protein to the periphery of viral replication centers.</title>
        <authorList>
            <person name="Ostberg S."/>
            <person name="Tormanen Persson H."/>
            <person name="Akusjarvi G."/>
        </authorList>
    </citation>
    <scope>SUBCELLULAR LOCATION</scope>
    <source>
        <strain>Human adenovirus C serotype 5</strain>
    </source>
</reference>
<gene>
    <name type="ORF">L4</name>
</gene>
<sequence length="195" mass="21543">MAPKKKLQLPPPPPTDEEEYWDSQAEEVLDEEEEMMEDWDSLDEASEAEEVSDETPSPSVAFPSPAPQKLATVPSIATTSAPQAPPALPVRRPNRRWDTTGTRAGKSKQPPPLAQEQQQRQGYRSWRGHKNAIVACLQDCGGNISFARRFLLYHHGVAFPRNILHYYRHLYSPYCTGGSGSGSNSSGHTEAKATG</sequence>
<comment type="function">
    <text evidence="2 4 5 7 9">Component of the packaging machinery which encapsidates the viral DNA into preformed capsids and transcriptional activator of the viral major late promoter (MLP). Binds, along with packaging proteins 1 and 3, to the specific packaging sequence on the left end of viral genomic DNA and plays an active role in packaging of the viral genome into preformed capsids. Specifically binds to the 5'-TTTG-3' nucleotides of the repeats making up the packaging sequence. Forms a transcription factor called DEF-A through cooperative binding with packaging protein 1 (Probable). DEF-A binds to downstream elements of the major late promoter (MLP) and stimulates transcription from the MLP after initiation of viral DNA replication. Simultaneously suppresses early gene expression and is thus likely to participate in the early-late switch in the expression pattern of the late viral proteins. May as well enhance transcription from IVa2 and pIX promoters.</text>
</comment>
<comment type="subunit">
    <text evidence="3 6 7">Part of a genome packaging complex composed of packaging proteins 1, 2 and 3; this complex specifically binds to the packaging sequence on the left end of viral genomic DNA and performs packaging of the viral genome. Self-assembles into higher-order structures.</text>
</comment>
<comment type="subcellular location">
    <subcellularLocation>
        <location evidence="8">Host nucleus</location>
    </subcellularLocation>
</comment>
<comment type="alternative products">
    <event type="alternative splicing"/>
    <isoform>
        <id>P0DJX1-1</id>
        <name>Packaging protein 2</name>
        <name>Packaging protein 22K</name>
        <name>L4-22K</name>
        <sequence type="displayed"/>
    </isoform>
    <isoform>
        <id>P24939-1</id>
        <name>Protein 33K</name>
        <name>Splicing factor 33K</name>
        <name>L4-33K</name>
        <sequence type="external"/>
    </isoform>
</comment>
<comment type="induction">
    <text>Expressed at the late phase of the viral replicative cycle. Probably already expressed from the early to late transition.</text>
</comment>
<comment type="miscellaneous">
    <text>All late proteins expressed from the major late promoter are produced by alternative splicing and alternative polyadenylation of the same gene giving rise to non-overlapping ORFs. Expression of packaging protein 2 and splicing factor is controlled by a L4 promoter distinct from the major late promoter.</text>
</comment>
<comment type="miscellaneous">
    <molecule>Isoform Packaging protein 2</molecule>
    <text>Unspliced isoform.</text>
</comment>
<comment type="similarity">
    <text evidence="9">Belongs to the adenoviridae splicing factor family.</text>
</comment>
<dbReference type="EMBL" id="J01917">
    <property type="status" value="NOT_ANNOTATED_CDS"/>
    <property type="molecule type" value="Genomic_DNA"/>
</dbReference>
<dbReference type="RefSeq" id="AP_000180.1">
    <molecule id="P0DJX1-1"/>
    <property type="nucleotide sequence ID" value="AC_000007.1"/>
</dbReference>
<dbReference type="Proteomes" id="UP000008167">
    <property type="component" value="Segment"/>
</dbReference>
<dbReference type="GO" id="GO:0042025">
    <property type="term" value="C:host cell nucleus"/>
    <property type="evidence" value="ECO:0007669"/>
    <property type="project" value="UniProtKB-SubCell"/>
</dbReference>
<dbReference type="GO" id="GO:0039708">
    <property type="term" value="P:nuclear capsid assembly"/>
    <property type="evidence" value="ECO:0000314"/>
    <property type="project" value="UniProtKB"/>
</dbReference>
<dbReference type="GO" id="GO:0019073">
    <property type="term" value="P:viral DNA genome packaging"/>
    <property type="evidence" value="ECO:0007669"/>
    <property type="project" value="InterPro"/>
</dbReference>
<dbReference type="InterPro" id="IPR021304">
    <property type="entry name" value="Adeno_L4-33K/L4-22K"/>
</dbReference>
<dbReference type="Pfam" id="PF11081">
    <property type="entry name" value="Adeno_L433K_22K"/>
    <property type="match status" value="1"/>
</dbReference>
<proteinExistence type="evidence at protein level"/>
<evidence type="ECO:0000256" key="1">
    <source>
        <dbReference type="SAM" id="MobiDB-lite"/>
    </source>
</evidence>
<evidence type="ECO:0000269" key="2">
    <source>
    </source>
</evidence>
<evidence type="ECO:0000269" key="3">
    <source>
    </source>
</evidence>
<evidence type="ECO:0000269" key="4">
    <source>
    </source>
</evidence>
<evidence type="ECO:0000269" key="5">
    <source>
    </source>
</evidence>
<evidence type="ECO:0000269" key="6">
    <source>
    </source>
</evidence>
<evidence type="ECO:0000269" key="7">
    <source>
    </source>
</evidence>
<evidence type="ECO:0000269" key="8">
    <source>
    </source>
</evidence>
<evidence type="ECO:0000305" key="9"/>
<feature type="chain" id="PRO_0000421107" description="Packaging protein 2">
    <location>
        <begin position="1"/>
        <end position="195"/>
    </location>
</feature>
<feature type="region of interest" description="Disordered" evidence="1">
    <location>
        <begin position="1"/>
        <end position="124"/>
    </location>
</feature>
<feature type="compositionally biased region" description="Acidic residues" evidence="1">
    <location>
        <begin position="15"/>
        <end position="53"/>
    </location>
</feature>
<feature type="compositionally biased region" description="Low complexity" evidence="1">
    <location>
        <begin position="54"/>
        <end position="63"/>
    </location>
</feature>
<organismHost>
    <name type="scientific">Homo sapiens</name>
    <name type="common">Human</name>
    <dbReference type="NCBI Taxonomy" id="9606"/>
</organismHost>
<protein>
    <recommendedName>
        <fullName>Packaging protein 2</fullName>
    </recommendedName>
    <alternativeName>
        <fullName>Packaging protein 22K</fullName>
        <shortName>L4-22K</shortName>
    </alternativeName>
</protein>
<organism>
    <name type="scientific">Human adenovirus C serotype 2</name>
    <name type="common">HAdV-2</name>
    <name type="synonym">Human adenovirus 2</name>
    <dbReference type="NCBI Taxonomy" id="10515"/>
    <lineage>
        <taxon>Viruses</taxon>
        <taxon>Varidnaviria</taxon>
        <taxon>Bamfordvirae</taxon>
        <taxon>Preplasmiviricota</taxon>
        <taxon>Tectiliviricetes</taxon>
        <taxon>Rowavirales</taxon>
        <taxon>Adenoviridae</taxon>
        <taxon>Mastadenovirus</taxon>
        <taxon>Human mastadenovirus C</taxon>
    </lineage>
</organism>